<reference key="1">
    <citation type="submission" date="2006-12" db="EMBL/GenBank/DDBJ databases">
        <title>Complete sequence of chromosome of Mycobacterium sp. KMS.</title>
        <authorList>
            <consortium name="US DOE Joint Genome Institute"/>
            <person name="Copeland A."/>
            <person name="Lucas S."/>
            <person name="Lapidus A."/>
            <person name="Barry K."/>
            <person name="Detter J.C."/>
            <person name="Glavina del Rio T."/>
            <person name="Hammon N."/>
            <person name="Israni S."/>
            <person name="Dalin E."/>
            <person name="Tice H."/>
            <person name="Pitluck S."/>
            <person name="Kiss H."/>
            <person name="Brettin T."/>
            <person name="Bruce D."/>
            <person name="Han C."/>
            <person name="Tapia R."/>
            <person name="Gilna P."/>
            <person name="Schmutz J."/>
            <person name="Larimer F."/>
            <person name="Land M."/>
            <person name="Hauser L."/>
            <person name="Kyrpides N."/>
            <person name="Mikhailova N."/>
            <person name="Miller C.D."/>
            <person name="Richardson P."/>
        </authorList>
    </citation>
    <scope>NUCLEOTIDE SEQUENCE [LARGE SCALE GENOMIC DNA]</scope>
    <source>
        <strain>KMS</strain>
    </source>
</reference>
<organism>
    <name type="scientific">Mycobacterium sp. (strain KMS)</name>
    <dbReference type="NCBI Taxonomy" id="189918"/>
    <lineage>
        <taxon>Bacteria</taxon>
        <taxon>Bacillati</taxon>
        <taxon>Actinomycetota</taxon>
        <taxon>Actinomycetes</taxon>
        <taxon>Mycobacteriales</taxon>
        <taxon>Mycobacteriaceae</taxon>
        <taxon>Mycobacterium</taxon>
    </lineage>
</organism>
<sequence length="609" mass="67822">MTSATIPGLDTAPTEHEGLLAWVREVAELTQPDRVVFTDGSEEECARLTEQLCEAGTFQKLNEEKKPNSYLALSDPSDVARVESRTYICSEREIDAGPTNNWMDPAEMRGIMTDLYRGSMRGRTMYVVPFCMGPLEAEDPKLGVEITDSEYVVVSMRTMTRMGQAALDKMGTDGFFVKALHSLGAPLEPGEKDVPWPCNDTKYITHFPETREIWSYGSGYGGNALLGKKCYSLRIASAMAHDEGWLAEHMLILKLISPENKAYFIAAAFPSACGKTNLAMLQPTIPGWRAETVGDDIAWMRFGKDGRLYAVNPEFGFFGVAPGTNWSSNPNAMKTIEAGNTVFTNVAKTDDGDVWWEGLEGEPDHLIDWKGNDYILRETETKAAHPNSRYCTPISQCPTLAPEWDDPQGVPISAILFGGRRKTTVPLITQARDWQHGVFIGATLGSEQTAAAEGKVGTVRRDPMAMLPFLGYNVGDYFQHWIDIGKNADESKMPAVFFVNWFRRGDDGRFLWPGFGENSRVLKWAIERIEHKADGRSTPIGIVPTAQDLDLEGLDVDPEDVDAALAVKPEEWRQELPLIEEWFEFVGEKLPTGIRDEFDALKHRLAEEA</sequence>
<dbReference type="EC" id="4.1.1.32" evidence="1"/>
<dbReference type="EMBL" id="CP000518">
    <property type="protein sequence ID" value="ABL89403.1"/>
    <property type="molecule type" value="Genomic_DNA"/>
</dbReference>
<dbReference type="SMR" id="A1U995"/>
<dbReference type="STRING" id="189918.Mkms_0185"/>
<dbReference type="KEGG" id="mkm:Mkms_0185"/>
<dbReference type="HOGENOM" id="CLU_028872_1_1_11"/>
<dbReference type="OrthoDB" id="9758871at2"/>
<dbReference type="UniPathway" id="UPA00138"/>
<dbReference type="GO" id="GO:0005829">
    <property type="term" value="C:cytosol"/>
    <property type="evidence" value="ECO:0007669"/>
    <property type="project" value="TreeGrafter"/>
</dbReference>
<dbReference type="GO" id="GO:0005525">
    <property type="term" value="F:GTP binding"/>
    <property type="evidence" value="ECO:0007669"/>
    <property type="project" value="UniProtKB-UniRule"/>
</dbReference>
<dbReference type="GO" id="GO:0030145">
    <property type="term" value="F:manganese ion binding"/>
    <property type="evidence" value="ECO:0007669"/>
    <property type="project" value="UniProtKB-UniRule"/>
</dbReference>
<dbReference type="GO" id="GO:0004613">
    <property type="term" value="F:phosphoenolpyruvate carboxykinase (GTP) activity"/>
    <property type="evidence" value="ECO:0007669"/>
    <property type="project" value="UniProtKB-UniRule"/>
</dbReference>
<dbReference type="GO" id="GO:0071333">
    <property type="term" value="P:cellular response to glucose stimulus"/>
    <property type="evidence" value="ECO:0007669"/>
    <property type="project" value="TreeGrafter"/>
</dbReference>
<dbReference type="GO" id="GO:0006094">
    <property type="term" value="P:gluconeogenesis"/>
    <property type="evidence" value="ECO:0007669"/>
    <property type="project" value="UniProtKB-UniRule"/>
</dbReference>
<dbReference type="GO" id="GO:0046327">
    <property type="term" value="P:glycerol biosynthetic process from pyruvate"/>
    <property type="evidence" value="ECO:0007669"/>
    <property type="project" value="TreeGrafter"/>
</dbReference>
<dbReference type="GO" id="GO:0006107">
    <property type="term" value="P:oxaloacetate metabolic process"/>
    <property type="evidence" value="ECO:0007669"/>
    <property type="project" value="TreeGrafter"/>
</dbReference>
<dbReference type="GO" id="GO:0019543">
    <property type="term" value="P:propionate catabolic process"/>
    <property type="evidence" value="ECO:0007669"/>
    <property type="project" value="TreeGrafter"/>
</dbReference>
<dbReference type="GO" id="GO:0033993">
    <property type="term" value="P:response to lipid"/>
    <property type="evidence" value="ECO:0007669"/>
    <property type="project" value="TreeGrafter"/>
</dbReference>
<dbReference type="GO" id="GO:0042594">
    <property type="term" value="P:response to starvation"/>
    <property type="evidence" value="ECO:0007669"/>
    <property type="project" value="TreeGrafter"/>
</dbReference>
<dbReference type="CDD" id="cd00819">
    <property type="entry name" value="PEPCK_GTP"/>
    <property type="match status" value="1"/>
</dbReference>
<dbReference type="FunFam" id="3.40.449.10:FF:000005">
    <property type="entry name" value="Phosphoenolpyruvate carboxykinase [GTP]"/>
    <property type="match status" value="1"/>
</dbReference>
<dbReference type="Gene3D" id="3.90.228.20">
    <property type="match status" value="1"/>
</dbReference>
<dbReference type="Gene3D" id="3.40.449.10">
    <property type="entry name" value="Phosphoenolpyruvate Carboxykinase, domain 1"/>
    <property type="match status" value="1"/>
</dbReference>
<dbReference type="Gene3D" id="2.170.8.10">
    <property type="entry name" value="Phosphoenolpyruvate Carboxykinase, domain 2"/>
    <property type="match status" value="1"/>
</dbReference>
<dbReference type="HAMAP" id="MF_00452">
    <property type="entry name" value="PEPCK_GTP"/>
    <property type="match status" value="1"/>
</dbReference>
<dbReference type="InterPro" id="IPR018091">
    <property type="entry name" value="PEP_carboxykin_GTP_CS"/>
</dbReference>
<dbReference type="InterPro" id="IPR013035">
    <property type="entry name" value="PEP_carboxykinase_C"/>
</dbReference>
<dbReference type="InterPro" id="IPR008209">
    <property type="entry name" value="PEP_carboxykinase_GTP"/>
</dbReference>
<dbReference type="InterPro" id="IPR035077">
    <property type="entry name" value="PEP_carboxykinase_GTP_C"/>
</dbReference>
<dbReference type="InterPro" id="IPR035078">
    <property type="entry name" value="PEP_carboxykinase_GTP_N"/>
</dbReference>
<dbReference type="InterPro" id="IPR008210">
    <property type="entry name" value="PEP_carboxykinase_N"/>
</dbReference>
<dbReference type="NCBIfam" id="NF003253">
    <property type="entry name" value="PRK04210.1"/>
    <property type="match status" value="1"/>
</dbReference>
<dbReference type="PANTHER" id="PTHR11561">
    <property type="entry name" value="PHOSPHOENOLPYRUVATE CARBOXYKINASE"/>
    <property type="match status" value="1"/>
</dbReference>
<dbReference type="PANTHER" id="PTHR11561:SF0">
    <property type="entry name" value="PHOSPHOENOLPYRUVATE CARBOXYKINASE [GTP]-RELATED"/>
    <property type="match status" value="1"/>
</dbReference>
<dbReference type="Pfam" id="PF00821">
    <property type="entry name" value="PEPCK_GTP"/>
    <property type="match status" value="1"/>
</dbReference>
<dbReference type="Pfam" id="PF17297">
    <property type="entry name" value="PEPCK_N"/>
    <property type="match status" value="1"/>
</dbReference>
<dbReference type="PIRSF" id="PIRSF001348">
    <property type="entry name" value="PEP_carboxykinase_GTP"/>
    <property type="match status" value="1"/>
</dbReference>
<dbReference type="SUPFAM" id="SSF68923">
    <property type="entry name" value="PEP carboxykinase N-terminal domain"/>
    <property type="match status" value="1"/>
</dbReference>
<dbReference type="SUPFAM" id="SSF53795">
    <property type="entry name" value="PEP carboxykinase-like"/>
    <property type="match status" value="1"/>
</dbReference>
<dbReference type="PROSITE" id="PS00505">
    <property type="entry name" value="PEPCK_GTP"/>
    <property type="match status" value="1"/>
</dbReference>
<feature type="chain" id="PRO_1000060294" description="Phosphoenolpyruvate carboxykinase [GTP]">
    <location>
        <begin position="1"/>
        <end position="609"/>
    </location>
</feature>
<feature type="active site" evidence="1">
    <location>
        <position position="273"/>
    </location>
</feature>
<feature type="binding site" evidence="1">
    <location>
        <position position="81"/>
    </location>
    <ligand>
        <name>substrate</name>
    </ligand>
</feature>
<feature type="binding site" evidence="1">
    <location>
        <begin position="220"/>
        <end position="222"/>
    </location>
    <ligand>
        <name>substrate</name>
    </ligand>
</feature>
<feature type="binding site" evidence="1">
    <location>
        <position position="229"/>
    </location>
    <ligand>
        <name>Mn(2+)</name>
        <dbReference type="ChEBI" id="CHEBI:29035"/>
    </ligand>
</feature>
<feature type="binding site" evidence="1">
    <location>
        <position position="249"/>
    </location>
    <ligand>
        <name>Mn(2+)</name>
        <dbReference type="ChEBI" id="CHEBI:29035"/>
    </ligand>
</feature>
<feature type="binding site" evidence="1">
    <location>
        <position position="271"/>
    </location>
    <ligand>
        <name>substrate</name>
    </ligand>
</feature>
<feature type="binding site" evidence="1">
    <location>
        <begin position="272"/>
        <end position="277"/>
    </location>
    <ligand>
        <name>GTP</name>
        <dbReference type="ChEBI" id="CHEBI:37565"/>
    </ligand>
</feature>
<feature type="binding site" evidence="1">
    <location>
        <position position="296"/>
    </location>
    <ligand>
        <name>Mn(2+)</name>
        <dbReference type="ChEBI" id="CHEBI:29035"/>
    </ligand>
</feature>
<feature type="binding site" evidence="1">
    <location>
        <begin position="387"/>
        <end position="389"/>
    </location>
    <ligand>
        <name>substrate</name>
    </ligand>
</feature>
<feature type="binding site" evidence="1">
    <location>
        <position position="389"/>
    </location>
    <ligand>
        <name>GTP</name>
        <dbReference type="ChEBI" id="CHEBI:37565"/>
    </ligand>
</feature>
<feature type="binding site" evidence="1">
    <location>
        <position position="420"/>
    </location>
    <ligand>
        <name>GTP</name>
        <dbReference type="ChEBI" id="CHEBI:37565"/>
    </ligand>
</feature>
<feature type="binding site" evidence="1">
    <location>
        <begin position="515"/>
        <end position="518"/>
    </location>
    <ligand>
        <name>GTP</name>
        <dbReference type="ChEBI" id="CHEBI:37565"/>
    </ligand>
</feature>
<name>PCKG_MYCSK</name>
<proteinExistence type="inferred from homology"/>
<evidence type="ECO:0000255" key="1">
    <source>
        <dbReference type="HAMAP-Rule" id="MF_00452"/>
    </source>
</evidence>
<keyword id="KW-0963">Cytoplasm</keyword>
<keyword id="KW-0210">Decarboxylase</keyword>
<keyword id="KW-0312">Gluconeogenesis</keyword>
<keyword id="KW-0342">GTP-binding</keyword>
<keyword id="KW-0456">Lyase</keyword>
<keyword id="KW-0464">Manganese</keyword>
<keyword id="KW-0479">Metal-binding</keyword>
<keyword id="KW-0547">Nucleotide-binding</keyword>
<accession>A1U995</accession>
<gene>
    <name evidence="1" type="primary">pckG</name>
    <name type="ordered locus">Mkms_0185</name>
</gene>
<comment type="function">
    <text evidence="1">Catalyzes the conversion of oxaloacetate (OAA) to phosphoenolpyruvate (PEP), the rate-limiting step in the metabolic pathway that produces glucose from lactate and other precursors derived from the citric acid cycle.</text>
</comment>
<comment type="catalytic activity">
    <reaction evidence="1">
        <text>oxaloacetate + GTP = phosphoenolpyruvate + GDP + CO2</text>
        <dbReference type="Rhea" id="RHEA:10388"/>
        <dbReference type="ChEBI" id="CHEBI:16452"/>
        <dbReference type="ChEBI" id="CHEBI:16526"/>
        <dbReference type="ChEBI" id="CHEBI:37565"/>
        <dbReference type="ChEBI" id="CHEBI:58189"/>
        <dbReference type="ChEBI" id="CHEBI:58702"/>
        <dbReference type="EC" id="4.1.1.32"/>
    </reaction>
</comment>
<comment type="cofactor">
    <cofactor evidence="1">
        <name>Mn(2+)</name>
        <dbReference type="ChEBI" id="CHEBI:29035"/>
    </cofactor>
    <text evidence="1">Binds 1 Mn(2+) ion per subunit.</text>
</comment>
<comment type="pathway">
    <text evidence="1">Carbohydrate biosynthesis; gluconeogenesis.</text>
</comment>
<comment type="subunit">
    <text evidence="1">Monomer.</text>
</comment>
<comment type="subcellular location">
    <subcellularLocation>
        <location evidence="1">Cytoplasm</location>
    </subcellularLocation>
</comment>
<comment type="similarity">
    <text evidence="1">Belongs to the phosphoenolpyruvate carboxykinase [GTP] family.</text>
</comment>
<protein>
    <recommendedName>
        <fullName evidence="1">Phosphoenolpyruvate carboxykinase [GTP]</fullName>
        <shortName evidence="1">PEP carboxykinase</shortName>
        <shortName evidence="1">PEPCK</shortName>
        <ecNumber evidence="1">4.1.1.32</ecNumber>
    </recommendedName>
</protein>